<feature type="transit peptide" description="Chloroplast" evidence="2">
    <location>
        <begin position="1"/>
        <end position="56"/>
    </location>
</feature>
<feature type="chain" id="PRO_0000372316" description="9-beta-pimara-7,15-diene synthase, chloroplastic">
    <location>
        <begin position="57"/>
        <end position="840"/>
    </location>
</feature>
<feature type="short sequence motif" description="DDXXD motif" evidence="5">
    <location>
        <begin position="589"/>
        <end position="593"/>
    </location>
</feature>
<feature type="binding site" evidence="1">
    <location>
        <position position="589"/>
    </location>
    <ligand>
        <name>Mg(2+)</name>
        <dbReference type="ChEBI" id="CHEBI:18420"/>
        <label>1</label>
    </ligand>
</feature>
<feature type="binding site" evidence="1">
    <location>
        <position position="589"/>
    </location>
    <ligand>
        <name>Mg(2+)</name>
        <dbReference type="ChEBI" id="CHEBI:18420"/>
        <label>2</label>
    </ligand>
</feature>
<feature type="binding site" evidence="1">
    <location>
        <position position="593"/>
    </location>
    <ligand>
        <name>Mg(2+)</name>
        <dbReference type="ChEBI" id="CHEBI:18420"/>
        <label>1</label>
    </ligand>
</feature>
<feature type="binding site" evidence="1">
    <location>
        <position position="593"/>
    </location>
    <ligand>
        <name>Mg(2+)</name>
        <dbReference type="ChEBI" id="CHEBI:18420"/>
        <label>2</label>
    </ligand>
</feature>
<feature type="binding site" evidence="1">
    <location>
        <position position="733"/>
    </location>
    <ligand>
        <name>Mg(2+)</name>
        <dbReference type="ChEBI" id="CHEBI:18420"/>
        <label>3</label>
    </ligand>
</feature>
<feature type="binding site" evidence="1">
    <location>
        <position position="737"/>
    </location>
    <ligand>
        <name>Mg(2+)</name>
        <dbReference type="ChEBI" id="CHEBI:18420"/>
        <label>3</label>
    </ligand>
</feature>
<feature type="binding site" evidence="1">
    <location>
        <position position="741"/>
    </location>
    <ligand>
        <name>Mg(2+)</name>
        <dbReference type="ChEBI" id="CHEBI:18420"/>
        <label>3</label>
    </ligand>
</feature>
<comment type="function">
    <text evidence="3">Involved in the biosynthesis of momilactone A and B phytoalexins. Catalyzes the conversion of syn-copalyl diphosphate to the phytoalexin precursor syn-pimara-7,15-diene.</text>
</comment>
<comment type="catalytic activity">
    <reaction evidence="3">
        <text>9alpha-copalyl diphosphate = 9beta-pimara-7,15-diene + diphosphate</text>
        <dbReference type="Rhea" id="RHEA:25560"/>
        <dbReference type="ChEBI" id="CHEBI:33019"/>
        <dbReference type="ChEBI" id="CHEBI:50067"/>
        <dbReference type="ChEBI" id="CHEBI:58622"/>
        <dbReference type="EC" id="4.2.3.35"/>
    </reaction>
    <physiologicalReaction direction="left-to-right" evidence="3">
        <dbReference type="Rhea" id="RHEA:25561"/>
    </physiologicalReaction>
</comment>
<comment type="cofactor">
    <cofactor evidence="1">
        <name>Mg(2+)</name>
        <dbReference type="ChEBI" id="CHEBI:18420"/>
    </cofactor>
    <text evidence="1">Binds 3 Mg(2+) ions per subunit.</text>
</comment>
<comment type="subcellular location">
    <subcellularLocation>
        <location evidence="2">Plastid</location>
        <location evidence="2">Chloroplast</location>
    </subcellularLocation>
</comment>
<comment type="induction">
    <text evidence="3">Induced by methyl jasmonate (MeJa) and UV irradiation.</text>
</comment>
<comment type="domain">
    <text>The Asp-Asp-Xaa-Xaa-Asp/Glu (DDXXD/E) motif is important for the catalytic activity, presumably through binding to Mg(2+).</text>
</comment>
<comment type="miscellaneous">
    <text evidence="5">9-beta-pimara-7,15-diene is a precursor of the phytoalexins momilactones A and B. Phytoalexins are diterpenoid secondary metabolites involved in the defense mechanism of the plant and produced in response to attack (by a pathogen, elicitor or UV irradiation). Momilactone B can also act as an allochemical (an antimicrobial and allelopathic agent), being constitutively produced in the root of the plant and secreted to the rhizosphere where it suppresses the growth of neighboring plants and soil microorganisms.</text>
</comment>
<comment type="similarity">
    <text evidence="5">Belongs to the terpene synthase family.</text>
</comment>
<dbReference type="EC" id="4.2.3.35" evidence="3"/>
<dbReference type="EMBL" id="AY616862">
    <property type="protein sequence ID" value="AAU05906.1"/>
    <property type="molecule type" value="mRNA"/>
</dbReference>
<dbReference type="EMBL" id="CM000129">
    <property type="protein sequence ID" value="EEC76856.1"/>
    <property type="molecule type" value="Genomic_DNA"/>
</dbReference>
<dbReference type="SMR" id="Q66QH3"/>
<dbReference type="STRING" id="39946.Q66QH3"/>
<dbReference type="EnsemblPlants" id="BGIOSGA015980-TA">
    <property type="protein sequence ID" value="BGIOSGA015980-PA"/>
    <property type="gene ID" value="BGIOSGA015980"/>
</dbReference>
<dbReference type="Gramene" id="BGIOSGA015980-TA">
    <property type="protein sequence ID" value="BGIOSGA015980-PA"/>
    <property type="gene ID" value="BGIOSGA015980"/>
</dbReference>
<dbReference type="KEGG" id="ag:AAU05906"/>
<dbReference type="HOGENOM" id="CLU_003125_2_0_1"/>
<dbReference type="OMA" id="HDEVEFC"/>
<dbReference type="BioCyc" id="MetaCyc:MONOMER-6803"/>
<dbReference type="Proteomes" id="UP000007015">
    <property type="component" value="Chromosome 4"/>
</dbReference>
<dbReference type="GO" id="GO:0009507">
    <property type="term" value="C:chloroplast"/>
    <property type="evidence" value="ECO:0007669"/>
    <property type="project" value="UniProtKB-SubCell"/>
</dbReference>
<dbReference type="GO" id="GO:0000287">
    <property type="term" value="F:magnesium ion binding"/>
    <property type="evidence" value="ECO:0007669"/>
    <property type="project" value="InterPro"/>
</dbReference>
<dbReference type="GO" id="GO:0034279">
    <property type="term" value="F:syn-pimara-7,15-diene synthase activity"/>
    <property type="evidence" value="ECO:0007669"/>
    <property type="project" value="UniProtKB-EC"/>
</dbReference>
<dbReference type="GO" id="GO:0010333">
    <property type="term" value="F:terpene synthase activity"/>
    <property type="evidence" value="ECO:0007669"/>
    <property type="project" value="InterPro"/>
</dbReference>
<dbReference type="GO" id="GO:0006952">
    <property type="term" value="P:defense response"/>
    <property type="evidence" value="ECO:0007669"/>
    <property type="project" value="UniProtKB-KW"/>
</dbReference>
<dbReference type="GO" id="GO:0016102">
    <property type="term" value="P:diterpenoid biosynthetic process"/>
    <property type="evidence" value="ECO:0007669"/>
    <property type="project" value="InterPro"/>
</dbReference>
<dbReference type="CDD" id="cd00684">
    <property type="entry name" value="Terpene_cyclase_plant_C1"/>
    <property type="match status" value="1"/>
</dbReference>
<dbReference type="FunFam" id="1.50.10.160:FF:000002">
    <property type="entry name" value="cis-abienol synthase, chloroplastic"/>
    <property type="match status" value="1"/>
</dbReference>
<dbReference type="FunFam" id="1.50.10.130:FF:000003">
    <property type="entry name" value="Ent-cassa-12,15-diene synthase"/>
    <property type="match status" value="1"/>
</dbReference>
<dbReference type="FunFam" id="1.10.600.10:FF:000005">
    <property type="entry name" value="Ent-kaur-16-ene synthase, chloroplastic"/>
    <property type="match status" value="1"/>
</dbReference>
<dbReference type="Gene3D" id="1.50.10.160">
    <property type="match status" value="1"/>
</dbReference>
<dbReference type="Gene3D" id="1.10.600.10">
    <property type="entry name" value="Farnesyl Diphosphate Synthase"/>
    <property type="match status" value="1"/>
</dbReference>
<dbReference type="Gene3D" id="1.50.10.130">
    <property type="entry name" value="Terpene synthase, N-terminal domain"/>
    <property type="match status" value="1"/>
</dbReference>
<dbReference type="InterPro" id="IPR008949">
    <property type="entry name" value="Isoprenoid_synthase_dom_sf"/>
</dbReference>
<dbReference type="InterPro" id="IPR044814">
    <property type="entry name" value="Terpene_cyclase_plant_C1"/>
</dbReference>
<dbReference type="InterPro" id="IPR001906">
    <property type="entry name" value="Terpene_synth_N"/>
</dbReference>
<dbReference type="InterPro" id="IPR036965">
    <property type="entry name" value="Terpene_synth_N_sf"/>
</dbReference>
<dbReference type="InterPro" id="IPR050148">
    <property type="entry name" value="Terpene_synthase-like"/>
</dbReference>
<dbReference type="InterPro" id="IPR005630">
    <property type="entry name" value="Terpene_synthase_metal-bd"/>
</dbReference>
<dbReference type="InterPro" id="IPR008930">
    <property type="entry name" value="Terpenoid_cyclase/PrenylTrfase"/>
</dbReference>
<dbReference type="PANTHER" id="PTHR31739:SF22">
    <property type="entry name" value="9-BETA-PIMARA-7,15-DIENE SYNTHASE, CHLOROPLASTIC"/>
    <property type="match status" value="1"/>
</dbReference>
<dbReference type="PANTHER" id="PTHR31739">
    <property type="entry name" value="ENT-COPALYL DIPHOSPHATE SYNTHASE, CHLOROPLASTIC"/>
    <property type="match status" value="1"/>
</dbReference>
<dbReference type="Pfam" id="PF01397">
    <property type="entry name" value="Terpene_synth"/>
    <property type="match status" value="1"/>
</dbReference>
<dbReference type="Pfam" id="PF03936">
    <property type="entry name" value="Terpene_synth_C"/>
    <property type="match status" value="1"/>
</dbReference>
<dbReference type="SFLD" id="SFLDG01014">
    <property type="entry name" value="Terpene_Cyclase_Like_1_N-term"/>
    <property type="match status" value="1"/>
</dbReference>
<dbReference type="SUPFAM" id="SSF48239">
    <property type="entry name" value="Terpenoid cyclases/Protein prenyltransferases"/>
    <property type="match status" value="2"/>
</dbReference>
<dbReference type="SUPFAM" id="SSF48576">
    <property type="entry name" value="Terpenoid synthases"/>
    <property type="match status" value="1"/>
</dbReference>
<gene>
    <name evidence="5" type="primary">KSL4</name>
    <name evidence="4" type="synonym">DTS2</name>
    <name evidence="6" type="ORF">OsI_014459</name>
</gene>
<accession>Q66QH3</accession>
<accession>A2XQW6</accession>
<proteinExistence type="evidence at protein level"/>
<reference key="1">
    <citation type="journal article" date="2004" name="Plant Physiol.">
        <title>Identification of syn-pimara-7,15-diene synthase reveals functional clustering of terpene synthases involved in rice phytoalexin/allelochemical biosynthesis.</title>
        <authorList>
            <person name="Wilderman P.R."/>
            <person name="Xu M."/>
            <person name="Jin Y."/>
            <person name="Coates R.M."/>
            <person name="Peters R.J."/>
        </authorList>
    </citation>
    <scope>NUCLEOTIDE SEQUENCE [MRNA]</scope>
    <scope>FUNCTION</scope>
    <scope>CATALYTIC ACTIVITY</scope>
    <scope>INDUCTION</scope>
    <source>
        <strain>cv. IR24</strain>
    </source>
</reference>
<reference key="2">
    <citation type="journal article" date="2005" name="PLoS Biol.">
        <title>The genomes of Oryza sativa: a history of duplications.</title>
        <authorList>
            <person name="Yu J."/>
            <person name="Wang J."/>
            <person name="Lin W."/>
            <person name="Li S."/>
            <person name="Li H."/>
            <person name="Zhou J."/>
            <person name="Ni P."/>
            <person name="Dong W."/>
            <person name="Hu S."/>
            <person name="Zeng C."/>
            <person name="Zhang J."/>
            <person name="Zhang Y."/>
            <person name="Li R."/>
            <person name="Xu Z."/>
            <person name="Li S."/>
            <person name="Li X."/>
            <person name="Zheng H."/>
            <person name="Cong L."/>
            <person name="Lin L."/>
            <person name="Yin J."/>
            <person name="Geng J."/>
            <person name="Li G."/>
            <person name="Shi J."/>
            <person name="Liu J."/>
            <person name="Lv H."/>
            <person name="Li J."/>
            <person name="Wang J."/>
            <person name="Deng Y."/>
            <person name="Ran L."/>
            <person name="Shi X."/>
            <person name="Wang X."/>
            <person name="Wu Q."/>
            <person name="Li C."/>
            <person name="Ren X."/>
            <person name="Wang J."/>
            <person name="Wang X."/>
            <person name="Li D."/>
            <person name="Liu D."/>
            <person name="Zhang X."/>
            <person name="Ji Z."/>
            <person name="Zhao W."/>
            <person name="Sun Y."/>
            <person name="Zhang Z."/>
            <person name="Bao J."/>
            <person name="Han Y."/>
            <person name="Dong L."/>
            <person name="Ji J."/>
            <person name="Chen P."/>
            <person name="Wu S."/>
            <person name="Liu J."/>
            <person name="Xiao Y."/>
            <person name="Bu D."/>
            <person name="Tan J."/>
            <person name="Yang L."/>
            <person name="Ye C."/>
            <person name="Zhang J."/>
            <person name="Xu J."/>
            <person name="Zhou Y."/>
            <person name="Yu Y."/>
            <person name="Zhang B."/>
            <person name="Zhuang S."/>
            <person name="Wei H."/>
            <person name="Liu B."/>
            <person name="Lei M."/>
            <person name="Yu H."/>
            <person name="Li Y."/>
            <person name="Xu H."/>
            <person name="Wei S."/>
            <person name="He X."/>
            <person name="Fang L."/>
            <person name="Zhang Z."/>
            <person name="Zhang Y."/>
            <person name="Huang X."/>
            <person name="Su Z."/>
            <person name="Tong W."/>
            <person name="Li J."/>
            <person name="Tong Z."/>
            <person name="Li S."/>
            <person name="Ye J."/>
            <person name="Wang L."/>
            <person name="Fang L."/>
            <person name="Lei T."/>
            <person name="Chen C.-S."/>
            <person name="Chen H.-C."/>
            <person name="Xu Z."/>
            <person name="Li H."/>
            <person name="Huang H."/>
            <person name="Zhang F."/>
            <person name="Xu H."/>
            <person name="Li N."/>
            <person name="Zhao C."/>
            <person name="Li S."/>
            <person name="Dong L."/>
            <person name="Huang Y."/>
            <person name="Li L."/>
            <person name="Xi Y."/>
            <person name="Qi Q."/>
            <person name="Li W."/>
            <person name="Zhang B."/>
            <person name="Hu W."/>
            <person name="Zhang Y."/>
            <person name="Tian X."/>
            <person name="Jiao Y."/>
            <person name="Liang X."/>
            <person name="Jin J."/>
            <person name="Gao L."/>
            <person name="Zheng W."/>
            <person name="Hao B."/>
            <person name="Liu S.-M."/>
            <person name="Wang W."/>
            <person name="Yuan L."/>
            <person name="Cao M."/>
            <person name="McDermott J."/>
            <person name="Samudrala R."/>
            <person name="Wang J."/>
            <person name="Wong G.K.-S."/>
            <person name="Yang H."/>
        </authorList>
    </citation>
    <scope>NUCLEOTIDE SEQUENCE [LARGE SCALE GENOMIC DNA]</scope>
    <source>
        <strain>cv. 93-11</strain>
    </source>
</reference>
<keyword id="KW-0150">Chloroplast</keyword>
<keyword id="KW-0456">Lyase</keyword>
<keyword id="KW-0460">Magnesium</keyword>
<keyword id="KW-0479">Metal-binding</keyword>
<keyword id="KW-0611">Plant defense</keyword>
<keyword id="KW-0934">Plastid</keyword>
<keyword id="KW-1185">Reference proteome</keyword>
<keyword id="KW-0809">Transit peptide</keyword>
<organism>
    <name type="scientific">Oryza sativa subsp. indica</name>
    <name type="common">Rice</name>
    <dbReference type="NCBI Taxonomy" id="39946"/>
    <lineage>
        <taxon>Eukaryota</taxon>
        <taxon>Viridiplantae</taxon>
        <taxon>Streptophyta</taxon>
        <taxon>Embryophyta</taxon>
        <taxon>Tracheophyta</taxon>
        <taxon>Spermatophyta</taxon>
        <taxon>Magnoliopsida</taxon>
        <taxon>Liliopsida</taxon>
        <taxon>Poales</taxon>
        <taxon>Poaceae</taxon>
        <taxon>BOP clade</taxon>
        <taxon>Oryzoideae</taxon>
        <taxon>Oryzeae</taxon>
        <taxon>Oryzinae</taxon>
        <taxon>Oryza</taxon>
        <taxon>Oryza sativa</taxon>
    </lineage>
</organism>
<name>KSL4_ORYSI</name>
<evidence type="ECO:0000250" key="1">
    <source>
        <dbReference type="UniProtKB" id="O81086"/>
    </source>
</evidence>
<evidence type="ECO:0000255" key="2"/>
<evidence type="ECO:0000269" key="3">
    <source>
    </source>
</evidence>
<evidence type="ECO:0000303" key="4">
    <source>
    </source>
</evidence>
<evidence type="ECO:0000305" key="5"/>
<evidence type="ECO:0000312" key="6">
    <source>
        <dbReference type="EMBL" id="AAU05906.1"/>
    </source>
</evidence>
<sequence length="840" mass="94758">MASPMEAVARSSLVLAPRRRRALGLLPAAAAPFVLDCRRRHNGGMRRPHVSFACSAELDTGRRQLPSTGTRAVMSSCPGYVEGRMVGENTSQINMGREARIRRHLENPEFLPSSYDIAWVAMVPLPGTDHLQAPCFPECVEWILQNQHSNGSWGVNEFDSSASKDILLSTLACIIALEKWNVGSEQIRRGLHFIAKNFSIVIDDQIAAPIGFNLTFPAMVNLAIKMGLEFPASEISIDQILHLRDMELKRLSGEESLGKEAYFAYIAEGLEESMVDWSEVMKFQGKNGSLFNSPAATAAALVHRYDDKALGYLYSVVNKFGGEVPTVYPLNIFSQLSMVDTLVNIGISRHFSSDIKRILDKTYILWSQRDEEVMLDLPTCAMAFRLLRMNGYGVSSDDLSHVAEASTFHNSVEGYLDDTKSLLELYKASKVSLSENEPILEKMGCWSGSLLKEKLCSDDIRGTPILGEVEYALKFPFYATLEPLDHKWNIENFDARAYQKIKTKNMPCHVNEDLLALAAEDFSFCQSTYQNEIQHLESWEKENKLDQLEFTRKNLINSYLSAAATISPYELSDARIACAKSIALTLVADDFFDVGSSKEEQENLISLVEKWDQYHKVEFYSENVKAVFFALYSTVNQLGAMASAVQNRDVTKYNVESWLDYLRSLATDAEWQRSKYVPTMEEYMKNSIVTFALGPTILIALYFMGQNLWEDIVKNAEYDELFRLMNTCGRLQNDIQSFERECKDGKLNSVSLLVLDSKDVMSVEEAKEAINESISSCRRELLRLVVREDGVIPKSCKEMFWNLYKTSHVFYSQADGFSSPKEMMGAMNGVIFEPLKTRGN</sequence>
<protein>
    <recommendedName>
        <fullName evidence="4">9-beta-pimara-7,15-diene synthase, chloroplastic</fullName>
        <ecNumber evidence="3">4.2.3.35</ecNumber>
    </recommendedName>
    <alternativeName>
        <fullName evidence="5">Ent-kaurene synthase-like 4</fullName>
        <shortName evidence="5">OsKS4</shortName>
        <shortName evidence="5">OsKSL4</shortName>
    </alternativeName>
    <alternativeName>
        <fullName evidence="4">OsDTS2</fullName>
    </alternativeName>
    <alternativeName>
        <fullName evidence="4">Syn-pimara-7,15-diene synthase</fullName>
    </alternativeName>
</protein>